<accession>Q7TSE9</accession>
<accession>Q5D1N3</accession>
<accession>Q5D1N4</accession>
<accession>Q7TSE7</accession>
<accession>Q7TSE8</accession>
<evidence type="ECO:0000250" key="1"/>
<evidence type="ECO:0000250" key="2">
    <source>
        <dbReference type="UniProtKB" id="O00165"/>
    </source>
</evidence>
<evidence type="ECO:0000250" key="3">
    <source>
        <dbReference type="UniProtKB" id="O35387"/>
    </source>
</evidence>
<evidence type="ECO:0000256" key="4">
    <source>
        <dbReference type="SAM" id="MobiDB-lite"/>
    </source>
</evidence>
<evidence type="ECO:0000269" key="5">
    <source>
    </source>
</evidence>
<evidence type="ECO:0000269" key="6">
    <source>
    </source>
</evidence>
<evidence type="ECO:0000269" key="7">
    <source>
    </source>
</evidence>
<evidence type="ECO:0000303" key="8">
    <source>
    </source>
</evidence>
<evidence type="ECO:0000305" key="9"/>
<protein>
    <recommendedName>
        <fullName>HCLS1-associated protein X-1</fullName>
    </recommendedName>
    <alternativeName>
        <fullName>HS1-associating protein X-1</fullName>
        <shortName>HAX-1</shortName>
    </alternativeName>
    <alternativeName>
        <fullName>HS1-binding protein 1</fullName>
        <shortName>HSP1BP-1</shortName>
    </alternativeName>
</protein>
<feature type="initiator methionine" description="Removed" evidence="2">
    <location>
        <position position="1"/>
    </location>
</feature>
<feature type="chain" id="PRO_0000313801" description="HCLS1-associated protein X-1">
    <location>
        <begin position="2"/>
        <end position="278"/>
    </location>
</feature>
<feature type="region of interest" description="Required for localization in mitochondria">
    <location>
        <begin position="2"/>
        <end position="43"/>
    </location>
</feature>
<feature type="region of interest" description="Disordered" evidence="4">
    <location>
        <begin position="15"/>
        <end position="50"/>
    </location>
</feature>
<feature type="region of interest" description="Disordered" evidence="4">
    <location>
        <begin position="99"/>
        <end position="262"/>
    </location>
</feature>
<feature type="region of interest" description="Involved in HCLS1 binding" evidence="1">
    <location>
        <begin position="113"/>
        <end position="278"/>
    </location>
</feature>
<feature type="region of interest" description="Involved in CASP9 binding" evidence="1">
    <location>
        <begin position="174"/>
        <end position="205"/>
    </location>
</feature>
<feature type="region of interest" description="Involved in GNA13 binding" evidence="1">
    <location>
        <begin position="175"/>
        <end position="246"/>
    </location>
</feature>
<feature type="region of interest" description="Required for localization in sarcoplasmic reticulum">
    <location>
        <begin position="182"/>
        <end position="278"/>
    </location>
</feature>
<feature type="region of interest" description="Involved in PKD2 binding" evidence="1">
    <location>
        <begin position="183"/>
        <end position="278"/>
    </location>
</feature>
<feature type="region of interest" description="Involved in ATP2A2 binding" evidence="1">
    <location>
        <begin position="202"/>
        <end position="244"/>
    </location>
</feature>
<feature type="region of interest" description="Involved in PLN binding" evidence="1">
    <location>
        <begin position="202"/>
        <end position="224"/>
    </location>
</feature>
<feature type="region of interest" description="Mediates interaction with UCP3" evidence="3">
    <location>
        <begin position="209"/>
        <end position="278"/>
    </location>
</feature>
<feature type="region of interest" description="Required for ITGB6 binding" evidence="1">
    <location>
        <begin position="269"/>
        <end position="278"/>
    </location>
</feature>
<feature type="compositionally biased region" description="Acidic residues" evidence="4">
    <location>
        <begin position="30"/>
        <end position="43"/>
    </location>
</feature>
<feature type="compositionally biased region" description="Basic and acidic residues" evidence="4">
    <location>
        <begin position="132"/>
        <end position="152"/>
    </location>
</feature>
<feature type="compositionally biased region" description="Basic and acidic residues" evidence="4">
    <location>
        <begin position="216"/>
        <end position="254"/>
    </location>
</feature>
<feature type="site" description="Cleavage; by caspase-3" evidence="1">
    <location>
        <begin position="126"/>
        <end position="127"/>
    </location>
</feature>
<feature type="modified residue" description="N-acetylserine" evidence="2">
    <location>
        <position position="2"/>
    </location>
</feature>
<feature type="modified residue" description="Phosphoserine" evidence="2">
    <location>
        <position position="188"/>
    </location>
</feature>
<feature type="modified residue" description="Phosphoserine" evidence="2">
    <location>
        <position position="191"/>
    </location>
</feature>
<feature type="splice variant" id="VSP_030138" description="In isoform 5 and isoform 6." evidence="8">
    <location>
        <begin position="1"/>
        <end position="26"/>
    </location>
</feature>
<feature type="splice variant" id="VSP_030137" description="In isoform 3." evidence="8">
    <original>MSVFDLFRGFFGFPGPRS</original>
    <variation>MQQGPERRKQWGSGKEDREQVIG</variation>
    <location>
        <begin position="1"/>
        <end position="18"/>
    </location>
</feature>
<feature type="splice variant" id="VSP_030139" description="In isoform 2 and isoform 6." evidence="8">
    <location>
        <begin position="44"/>
        <end position="104"/>
    </location>
</feature>
<organism>
    <name type="scientific">Rattus norvegicus</name>
    <name type="common">Rat</name>
    <dbReference type="NCBI Taxonomy" id="10116"/>
    <lineage>
        <taxon>Eukaryota</taxon>
        <taxon>Metazoa</taxon>
        <taxon>Chordata</taxon>
        <taxon>Craniata</taxon>
        <taxon>Vertebrata</taxon>
        <taxon>Euteleostomi</taxon>
        <taxon>Mammalia</taxon>
        <taxon>Eutheria</taxon>
        <taxon>Euarchontoglires</taxon>
        <taxon>Glires</taxon>
        <taxon>Rodentia</taxon>
        <taxon>Myomorpha</taxon>
        <taxon>Muroidea</taxon>
        <taxon>Muridae</taxon>
        <taxon>Murinae</taxon>
        <taxon>Rattus</taxon>
    </lineage>
</organism>
<keyword id="KW-0007">Acetylation</keyword>
<keyword id="KW-0025">Alternative splicing</keyword>
<keyword id="KW-1003">Cell membrane</keyword>
<keyword id="KW-0963">Cytoplasm</keyword>
<keyword id="KW-0968">Cytoplasmic vesicle</keyword>
<keyword id="KW-0256">Endoplasmic reticulum</keyword>
<keyword id="KW-0472">Membrane</keyword>
<keyword id="KW-0496">Mitochondrion</keyword>
<keyword id="KW-0539">Nucleus</keyword>
<keyword id="KW-0597">Phosphoprotein</keyword>
<keyword id="KW-1185">Reference proteome</keyword>
<keyword id="KW-0703">Sarcoplasmic reticulum</keyword>
<dbReference type="EMBL" id="AY291062">
    <property type="protein sequence ID" value="AAP44974.1"/>
    <property type="molecule type" value="mRNA"/>
</dbReference>
<dbReference type="EMBL" id="AY291063">
    <property type="protein sequence ID" value="AAP44975.1"/>
    <property type="molecule type" value="mRNA"/>
</dbReference>
<dbReference type="EMBL" id="AY291064">
    <property type="protein sequence ID" value="AAP44976.1"/>
    <property type="molecule type" value="mRNA"/>
</dbReference>
<dbReference type="EMBL" id="AY919342">
    <property type="protein sequence ID" value="AAX18866.1"/>
    <property type="molecule type" value="mRNA"/>
</dbReference>
<dbReference type="EMBL" id="AY919343">
    <property type="protein sequence ID" value="AAX18867.1"/>
    <property type="molecule type" value="mRNA"/>
</dbReference>
<dbReference type="EMBL" id="DQ286293">
    <property type="protein sequence ID" value="ABB91376.1"/>
    <property type="molecule type" value="Genomic_DNA"/>
</dbReference>
<dbReference type="RefSeq" id="NP_853658.1">
    <molecule id="Q7TSE9-1"/>
    <property type="nucleotide sequence ID" value="NM_181627.2"/>
</dbReference>
<dbReference type="RefSeq" id="XP_038957793.1">
    <molecule id="Q7TSE9-3"/>
    <property type="nucleotide sequence ID" value="XM_039101865.2"/>
</dbReference>
<dbReference type="RefSeq" id="XP_038957796.1">
    <molecule id="Q7TSE9-5"/>
    <property type="nucleotide sequence ID" value="XM_039101868.2"/>
</dbReference>
<dbReference type="RefSeq" id="XP_038957798.1">
    <molecule id="Q7TSE9-2"/>
    <property type="nucleotide sequence ID" value="XM_039101870.2"/>
</dbReference>
<dbReference type="RefSeq" id="XP_038957800.1">
    <molecule id="Q7TSE9-6"/>
    <property type="nucleotide sequence ID" value="XM_039101872.2"/>
</dbReference>
<dbReference type="FunCoup" id="Q7TSE9">
    <property type="interactions" value="838"/>
</dbReference>
<dbReference type="IntAct" id="Q7TSE9">
    <property type="interactions" value="4"/>
</dbReference>
<dbReference type="STRING" id="10116.ENSRNOP00000064877"/>
<dbReference type="PhosphoSitePlus" id="Q7TSE9"/>
<dbReference type="jPOST" id="Q7TSE9"/>
<dbReference type="PaxDb" id="10116-ENSRNOP00000064877"/>
<dbReference type="DNASU" id="291202"/>
<dbReference type="Ensembl" id="ENSRNOT00000071253.4">
    <molecule id="Q7TSE9-3"/>
    <property type="protein sequence ID" value="ENSRNOP00000067159.3"/>
    <property type="gene ID" value="ENSRNOG00000045647.4"/>
</dbReference>
<dbReference type="Ensembl" id="ENSRNOT00000073599.4">
    <molecule id="Q7TSE9-1"/>
    <property type="protein sequence ID" value="ENSRNOP00000064877.2"/>
    <property type="gene ID" value="ENSRNOG00000045647.4"/>
</dbReference>
<dbReference type="GeneID" id="291202"/>
<dbReference type="KEGG" id="rno:291202"/>
<dbReference type="AGR" id="RGD:727960"/>
<dbReference type="CTD" id="10456"/>
<dbReference type="RGD" id="727960">
    <property type="gene designation" value="Hax1"/>
</dbReference>
<dbReference type="eggNOG" id="ENOG502S0AE">
    <property type="taxonomic scope" value="Eukaryota"/>
</dbReference>
<dbReference type="GeneTree" id="ENSGT00390000018324"/>
<dbReference type="InParanoid" id="Q7TSE9"/>
<dbReference type="OMA" id="FSNTEAW"/>
<dbReference type="PhylomeDB" id="Q7TSE9"/>
<dbReference type="PRO" id="PR:Q7TSE9"/>
<dbReference type="Proteomes" id="UP000002494">
    <property type="component" value="Chromosome 2"/>
</dbReference>
<dbReference type="GO" id="GO:0015629">
    <property type="term" value="C:actin cytoskeleton"/>
    <property type="evidence" value="ECO:0000266"/>
    <property type="project" value="RGD"/>
</dbReference>
<dbReference type="GO" id="GO:0016324">
    <property type="term" value="C:apical plasma membrane"/>
    <property type="evidence" value="ECO:0000314"/>
    <property type="project" value="RGD"/>
</dbReference>
<dbReference type="GO" id="GO:0005938">
    <property type="term" value="C:cell cortex"/>
    <property type="evidence" value="ECO:0007669"/>
    <property type="project" value="UniProtKB-SubCell"/>
</dbReference>
<dbReference type="GO" id="GO:0030136">
    <property type="term" value="C:clathrin-coated vesicle"/>
    <property type="evidence" value="ECO:0000314"/>
    <property type="project" value="RGD"/>
</dbReference>
<dbReference type="GO" id="GO:0005737">
    <property type="term" value="C:cytoplasm"/>
    <property type="evidence" value="ECO:0000266"/>
    <property type="project" value="RGD"/>
</dbReference>
<dbReference type="GO" id="GO:0005783">
    <property type="term" value="C:endoplasmic reticulum"/>
    <property type="evidence" value="ECO:0000266"/>
    <property type="project" value="RGD"/>
</dbReference>
<dbReference type="GO" id="GO:0030027">
    <property type="term" value="C:lamellipodium"/>
    <property type="evidence" value="ECO:0000266"/>
    <property type="project" value="RGD"/>
</dbReference>
<dbReference type="GO" id="GO:0005758">
    <property type="term" value="C:mitochondrial intermembrane space"/>
    <property type="evidence" value="ECO:0000266"/>
    <property type="project" value="RGD"/>
</dbReference>
<dbReference type="GO" id="GO:0005759">
    <property type="term" value="C:mitochondrial matrix"/>
    <property type="evidence" value="ECO:0000266"/>
    <property type="project" value="RGD"/>
</dbReference>
<dbReference type="GO" id="GO:0005741">
    <property type="term" value="C:mitochondrial outer membrane"/>
    <property type="evidence" value="ECO:0000266"/>
    <property type="project" value="RGD"/>
</dbReference>
<dbReference type="GO" id="GO:0005739">
    <property type="term" value="C:mitochondrion"/>
    <property type="evidence" value="ECO:0000266"/>
    <property type="project" value="RGD"/>
</dbReference>
<dbReference type="GO" id="GO:0031965">
    <property type="term" value="C:nuclear membrane"/>
    <property type="evidence" value="ECO:0007669"/>
    <property type="project" value="UniProtKB-SubCell"/>
</dbReference>
<dbReference type="GO" id="GO:0000932">
    <property type="term" value="C:P-body"/>
    <property type="evidence" value="ECO:0007669"/>
    <property type="project" value="UniProtKB-SubCell"/>
</dbReference>
<dbReference type="GO" id="GO:0016529">
    <property type="term" value="C:sarcoplasmic reticulum"/>
    <property type="evidence" value="ECO:0000314"/>
    <property type="project" value="CACAO"/>
</dbReference>
<dbReference type="GO" id="GO:0005667">
    <property type="term" value="C:transcription regulator complex"/>
    <property type="evidence" value="ECO:0000266"/>
    <property type="project" value="RGD"/>
</dbReference>
<dbReference type="GO" id="GO:0019966">
    <property type="term" value="F:interleukin-1 binding"/>
    <property type="evidence" value="ECO:0000266"/>
    <property type="project" value="RGD"/>
</dbReference>
<dbReference type="GO" id="GO:0019904">
    <property type="term" value="F:protein domain specific binding"/>
    <property type="evidence" value="ECO:0000353"/>
    <property type="project" value="RGD"/>
</dbReference>
<dbReference type="GO" id="GO:0035591">
    <property type="term" value="F:signaling adaptor activity"/>
    <property type="evidence" value="ECO:0000266"/>
    <property type="project" value="RGD"/>
</dbReference>
<dbReference type="GO" id="GO:0071345">
    <property type="term" value="P:cellular response to cytokine stimulus"/>
    <property type="evidence" value="ECO:0000266"/>
    <property type="project" value="RGD"/>
</dbReference>
<dbReference type="GO" id="GO:0038158">
    <property type="term" value="P:granulocyte colony-stimulating factor signaling pathway"/>
    <property type="evidence" value="ECO:0000266"/>
    <property type="project" value="RGD"/>
</dbReference>
<dbReference type="GO" id="GO:0043066">
    <property type="term" value="P:negative regulation of apoptotic process"/>
    <property type="evidence" value="ECO:0000266"/>
    <property type="project" value="RGD"/>
</dbReference>
<dbReference type="GO" id="GO:0030854">
    <property type="term" value="P:positive regulation of granulocyte differentiation"/>
    <property type="evidence" value="ECO:0000266"/>
    <property type="project" value="RGD"/>
</dbReference>
<dbReference type="GO" id="GO:0051897">
    <property type="term" value="P:positive regulation of phosphatidylinositol 3-kinase/protein kinase B signal transduction"/>
    <property type="evidence" value="ECO:0000266"/>
    <property type="project" value="RGD"/>
</dbReference>
<dbReference type="GO" id="GO:0045944">
    <property type="term" value="P:positive regulation of transcription by RNA polymerase II"/>
    <property type="evidence" value="ECO:0000266"/>
    <property type="project" value="RGD"/>
</dbReference>
<dbReference type="GO" id="GO:0110053">
    <property type="term" value="P:regulation of actin filament organization"/>
    <property type="evidence" value="ECO:0000266"/>
    <property type="project" value="RGD"/>
</dbReference>
<dbReference type="GO" id="GO:0030833">
    <property type="term" value="P:regulation of actin filament polymerization"/>
    <property type="evidence" value="ECO:0000266"/>
    <property type="project" value="RGD"/>
</dbReference>
<dbReference type="InterPro" id="IPR017248">
    <property type="entry name" value="HAX-1"/>
</dbReference>
<dbReference type="PANTHER" id="PTHR14938">
    <property type="entry name" value="HCLS1-ASSOCIATED PROTEIN X-1"/>
    <property type="match status" value="1"/>
</dbReference>
<dbReference type="PANTHER" id="PTHR14938:SF2">
    <property type="entry name" value="HCLS1-ASSOCIATED PROTEIN X-1"/>
    <property type="match status" value="1"/>
</dbReference>
<dbReference type="PIRSF" id="PIRSF037634">
    <property type="entry name" value="HS1-associating_X-1"/>
    <property type="match status" value="1"/>
</dbReference>
<reference key="1">
    <citation type="journal article" date="2006" name="Gene">
        <title>Identification and expression analysis of alternative splice variants of the rat Hax-1 gene.</title>
        <authorList>
            <person name="Grzybowska E.A."/>
            <person name="Sarnowska E."/>
            <person name="Konopinski R."/>
            <person name="Wilczynska A."/>
            <person name="Sarnowski T.J."/>
            <person name="Siedlecki J.A."/>
        </authorList>
    </citation>
    <scope>NUCLEOTIDE SEQUENCE [GENOMIC DNA / MRNA] (ISOFORMS 1; 2; 3; 5 AND 6)</scope>
    <source>
        <strain>Lewis</strain>
        <tissue>Testis</tissue>
    </source>
</reference>
<reference key="2">
    <citation type="journal article" date="2004" name="J. Biol. Chem.">
        <title>Identification of HAX-1 as a protein that binds bile salt export protein and regulates its abundance in the apical membrane of Madin-Darby canine kidney cells.</title>
        <authorList>
            <person name="Ortiz D.F."/>
            <person name="Moseley J."/>
            <person name="Calderon G."/>
            <person name="Swift A.L."/>
            <person name="Li S."/>
            <person name="Arias I.M."/>
        </authorList>
    </citation>
    <scope>INTERACTION WITH ABCB1; ABCB4; ABCB11 AND CTTN</scope>
    <scope>SUBCELLULAR LOCATION</scope>
    <scope>FUNCTION</scope>
</reference>
<reference key="3">
    <citation type="journal article" date="2010" name="J. Mol. Cell. Cardiol.">
        <title>HAX-1: a multifaceted antiapoptotic protein localizing in the mitochondria and the sarcoplasmic reticulum of striated muscle cells.</title>
        <authorList>
            <person name="Yap S.V."/>
            <person name="Vafiadaki E."/>
            <person name="Strong J."/>
            <person name="Kontrogianni-Konstantopoulos A."/>
        </authorList>
    </citation>
    <scope>SUBCELLULAR LOCATION</scope>
    <scope>FUNCTION</scope>
    <scope>DEVELOPMENTAL STAGE</scope>
    <scope>TISSUE SPECIFICITY</scope>
</reference>
<reference key="4">
    <citation type="journal article" date="2013" name="FEBS J.">
        <title>HAX-1 is a nucleocytoplasmic shuttling protein with a possible role in mRNA processing.</title>
        <authorList>
            <person name="Grzybowska E.A."/>
            <person name="Zayat V."/>
            <person name="Konopinski R."/>
            <person name="Trebinska A."/>
            <person name="Szwarc M."/>
            <person name="Sarnowska E."/>
            <person name="Macech E."/>
            <person name="Korczynski J."/>
            <person name="Knapp A."/>
            <person name="Siedlecki J.A."/>
        </authorList>
    </citation>
    <scope>ALTERNATIVE SPLICING</scope>
    <scope>SUBCELLULAR LOCATION (ISOFORM 1)</scope>
</reference>
<name>HAX1_RAT</name>
<comment type="function">
    <text evidence="2 5 6">Recruits the Arp2/3 complex to the cell cortex and regulates reorganization of the cortical actin cytoskeleton via its interaction with KCNC3 and the Arp2/3 complex. Slows down the rate of inactivation of KCNC3 channels. Promotes GNA13-mediated cell migration. Involved in the clathrin-mediated endocytosis pathway. May be involved in internalization of ABC transporters such as ABCB11. May inhibit CASP9 and CASP3. Promotes cell survival. May regulate intracellular calcium pools.</text>
</comment>
<comment type="subunit">
    <text evidence="2 3 5">Interacts with ABCB1, ABCB4 and ABCB11 (PubMed:15159385). Directly associates with HCLS1/HS1, through binding to its N-terminal region (By similarity). Interacts with CTTN (PubMed:15159385). Interacts with PKD2. Interacts with GNA13. Interacts with CASP9. Interacts with ITGB6. Interacts with PLN and ATP2A2; these interactions are inhibited by calcium. Interacts with GRB7. Interacts (via C-terminus) with XIAP/BIRC4 (via BIR 2 domain and BIR 3 domain) and this interaction blocks ubiquitination of XIAP/BIRC4. Interacts with TPC2. Interacts with KCNC3. Interacts with XPO1 (By similarity). Interacts with RNF217 (By similarity). Interacts with UCP3; the interaction is direct and calcium-dependent (By similarity). Interacts with MAPRE2; this interaction regulates cell migration in keratinocytes (By similarity).</text>
</comment>
<comment type="interaction">
    <interactant intactId="EBI-930005">
        <id>Q7TSE9</id>
    </interactant>
    <interactant intactId="EBI-930036">
        <id>O70127</id>
        <label>Abcb11</label>
    </interactant>
    <organismsDiffer>false</organismsDiffer>
    <experiments>5</experiments>
</comment>
<comment type="interaction">
    <interactant intactId="EBI-930005">
        <id>Q7TSE9</id>
    </interactant>
    <interactant intactId="EBI-930055">
        <id>Q6PSM0</id>
        <label>Abcb1a</label>
    </interactant>
    <organismsDiffer>false</organismsDiffer>
    <experiments>2</experiments>
</comment>
<comment type="interaction">
    <interactant intactId="EBI-930005">
        <id>Q7TSE9</id>
    </interactant>
    <interactant intactId="EBI-929988">
        <id>Q08201</id>
        <label>Abcb4</label>
    </interactant>
    <organismsDiffer>false</organismsDiffer>
    <experiments>3</experiments>
</comment>
<comment type="subcellular location">
    <subcellularLocation>
        <location evidence="6">Mitochondrion matrix</location>
    </subcellularLocation>
    <subcellularLocation>
        <location evidence="2">Endoplasmic reticulum</location>
    </subcellularLocation>
    <subcellularLocation>
        <location evidence="2">Nucleus membrane</location>
    </subcellularLocation>
    <subcellularLocation>
        <location evidence="5">Cytoplasmic vesicle</location>
    </subcellularLocation>
    <subcellularLocation>
        <location evidence="2">Cytoplasm</location>
        <location evidence="2">Cell cortex</location>
    </subcellularLocation>
    <subcellularLocation>
        <location evidence="2">Cell membrane</location>
        <topology evidence="2">Peripheral membrane protein</topology>
        <orientation evidence="2">Cytoplasmic side</orientation>
    </subcellularLocation>
    <subcellularLocation>
        <location evidence="6">Sarcoplasmic reticulum</location>
    </subcellularLocation>
    <subcellularLocation>
        <location evidence="2">Cytoplasm</location>
        <location evidence="2">P-body</location>
    </subcellularLocation>
    <subcellularLocation>
        <location evidence="7">Cytoplasm</location>
    </subcellularLocation>
    <subcellularLocation>
        <location evidence="2">Nucleus</location>
    </subcellularLocation>
</comment>
<comment type="subcellular location">
    <molecule>Isoform 1</molecule>
    <subcellularLocation>
        <location evidence="7">Cytoplasm</location>
    </subcellularLocation>
    <subcellularLocation>
        <location evidence="2">Nucleus</location>
    </subcellularLocation>
    <text evidence="2">Predominantly cytoplasmic. Also detected in the nucleus when nuclear export is inhibited, and in response to cellular stress caused by arsenite (in vitro).</text>
</comment>
<comment type="alternative products">
    <event type="alternative splicing"/>
    <isoform>
        <id>Q7TSE9-1</id>
        <name>1</name>
        <sequence type="displayed"/>
    </isoform>
    <isoform>
        <id>Q7TSE9-2</id>
        <name>2</name>
        <sequence type="described" ref="VSP_030139"/>
    </isoform>
    <isoform>
        <id>Q7TSE9-3</id>
        <name>3</name>
        <sequence type="described" ref="VSP_030137"/>
    </isoform>
    <isoform>
        <id>Q7TSE9-5</id>
        <name>5</name>
        <sequence type="described" ref="VSP_030138"/>
    </isoform>
    <isoform>
        <id>Q7TSE9-6</id>
        <name>6</name>
        <sequence type="described" ref="VSP_030138 VSP_030139"/>
    </isoform>
</comment>
<comment type="tissue specificity">
    <text evidence="6">Present in striated muscles (at protein level).</text>
</comment>
<comment type="developmental stage">
    <text evidence="6">Abundant in hindlimb and cardiac muscles throughout embryogenesis (at protein level).</text>
</comment>
<comment type="similarity">
    <text evidence="9">Belongs to the HAX1 family.</text>
</comment>
<gene>
    <name type="primary">Hax1</name>
    <name type="synonym">Hs1bp1</name>
</gene>
<sequence length="278" mass="31448">MSVFDLFRGFFGFPGPRSHRDPFFGGMTRDDDDDEDDEEEEDSGAWGRESYAFDGFHPTEEFGFSFSPRGGMRFHGNFGFDDLVRDFNSIFSEMGAWTLPSHSPELPGPESETPGVRLREGQTLRDSMLKYPDSHQPRIFEGVLESHAKPESSKPAPDWGSQGPFHRLDDTWPVSPHSRAREDKDLDSQVSQEGLGPLLQPQPKSYFKSISVTKITKPDGTVEEHRTVVDSEGRRETTVTHQEAHDSSRSDPDPPRSSALDDPFSILDLLLGRWFRSR</sequence>
<proteinExistence type="evidence at protein level"/>